<organism>
    <name type="scientific">Staphylococcus aureus (strain N315)</name>
    <dbReference type="NCBI Taxonomy" id="158879"/>
    <lineage>
        <taxon>Bacteria</taxon>
        <taxon>Bacillati</taxon>
        <taxon>Bacillota</taxon>
        <taxon>Bacilli</taxon>
        <taxon>Bacillales</taxon>
        <taxon>Staphylococcaceae</taxon>
        <taxon>Staphylococcus</taxon>
    </lineage>
</organism>
<comment type="subunit">
    <text evidence="1">Part of the 50S ribosomal subunit.</text>
</comment>
<comment type="similarity">
    <text evidence="1">Belongs to the bacterial ribosomal protein bL31 family. Type B subfamily.</text>
</comment>
<feature type="chain" id="PRO_0000173257" description="Large ribosomal subunit protein bL31B">
    <location>
        <begin position="1"/>
        <end position="84"/>
    </location>
</feature>
<keyword id="KW-0687">Ribonucleoprotein</keyword>
<keyword id="KW-0689">Ribosomal protein</keyword>
<accession>P66196</accession>
<accession>Q99SD8</accession>
<dbReference type="EMBL" id="BA000018">
    <property type="protein sequence ID" value="BAB43206.1"/>
    <property type="molecule type" value="Genomic_DNA"/>
</dbReference>
<dbReference type="PIR" id="E90005">
    <property type="entry name" value="E90005"/>
</dbReference>
<dbReference type="RefSeq" id="WP_000808968.1">
    <property type="nucleotide sequence ID" value="NC_002745.2"/>
</dbReference>
<dbReference type="SMR" id="P66196"/>
<dbReference type="EnsemblBacteria" id="BAB43206">
    <property type="protein sequence ID" value="BAB43206"/>
    <property type="gene ID" value="BAB43206"/>
</dbReference>
<dbReference type="KEGG" id="sau:SA1922"/>
<dbReference type="HOGENOM" id="CLU_114306_2_2_9"/>
<dbReference type="GO" id="GO:1990904">
    <property type="term" value="C:ribonucleoprotein complex"/>
    <property type="evidence" value="ECO:0007669"/>
    <property type="project" value="UniProtKB-KW"/>
</dbReference>
<dbReference type="GO" id="GO:0005840">
    <property type="term" value="C:ribosome"/>
    <property type="evidence" value="ECO:0007669"/>
    <property type="project" value="UniProtKB-KW"/>
</dbReference>
<dbReference type="GO" id="GO:0003735">
    <property type="term" value="F:structural constituent of ribosome"/>
    <property type="evidence" value="ECO:0007669"/>
    <property type="project" value="InterPro"/>
</dbReference>
<dbReference type="GO" id="GO:0006412">
    <property type="term" value="P:translation"/>
    <property type="evidence" value="ECO:0007669"/>
    <property type="project" value="UniProtKB-UniRule"/>
</dbReference>
<dbReference type="Gene3D" id="4.10.830.30">
    <property type="entry name" value="Ribosomal protein L31"/>
    <property type="match status" value="1"/>
</dbReference>
<dbReference type="HAMAP" id="MF_00502">
    <property type="entry name" value="Ribosomal_bL31_2"/>
    <property type="match status" value="1"/>
</dbReference>
<dbReference type="InterPro" id="IPR034704">
    <property type="entry name" value="Ribosomal_bL28/bL31-like_sf"/>
</dbReference>
<dbReference type="InterPro" id="IPR002150">
    <property type="entry name" value="Ribosomal_bL31"/>
</dbReference>
<dbReference type="InterPro" id="IPR027493">
    <property type="entry name" value="Ribosomal_bL31_B"/>
</dbReference>
<dbReference type="InterPro" id="IPR042105">
    <property type="entry name" value="Ribosomal_bL31_sf"/>
</dbReference>
<dbReference type="NCBIfam" id="TIGR00105">
    <property type="entry name" value="L31"/>
    <property type="match status" value="1"/>
</dbReference>
<dbReference type="NCBIfam" id="NF002462">
    <property type="entry name" value="PRK01678.1"/>
    <property type="match status" value="1"/>
</dbReference>
<dbReference type="PANTHER" id="PTHR33280">
    <property type="entry name" value="50S RIBOSOMAL PROTEIN L31, CHLOROPLASTIC"/>
    <property type="match status" value="1"/>
</dbReference>
<dbReference type="PANTHER" id="PTHR33280:SF1">
    <property type="entry name" value="LARGE RIBOSOMAL SUBUNIT PROTEIN BL31C"/>
    <property type="match status" value="1"/>
</dbReference>
<dbReference type="Pfam" id="PF01197">
    <property type="entry name" value="Ribosomal_L31"/>
    <property type="match status" value="1"/>
</dbReference>
<dbReference type="PRINTS" id="PR01249">
    <property type="entry name" value="RIBOSOMALL31"/>
</dbReference>
<dbReference type="SUPFAM" id="SSF143800">
    <property type="entry name" value="L28p-like"/>
    <property type="match status" value="1"/>
</dbReference>
<dbReference type="PROSITE" id="PS01143">
    <property type="entry name" value="RIBOSOMAL_L31"/>
    <property type="match status" value="1"/>
</dbReference>
<evidence type="ECO:0000255" key="1">
    <source>
        <dbReference type="HAMAP-Rule" id="MF_00502"/>
    </source>
</evidence>
<evidence type="ECO:0000305" key="2"/>
<gene>
    <name evidence="1" type="primary">rpmE2</name>
    <name type="synonym">rpmE</name>
    <name type="ordered locus">SA1922</name>
</gene>
<protein>
    <recommendedName>
        <fullName evidence="1">Large ribosomal subunit protein bL31B</fullName>
    </recommendedName>
    <alternativeName>
        <fullName evidence="2">50S ribosomal protein L31 type B</fullName>
    </alternativeName>
</protein>
<sequence length="84" mass="9723">MKQGIHPEYHQVIFLDTTTNFKFLSGSTKTSSEMMEWEDGKEYPVIRLDISSDSHPFYTGRQKFAAADGRVERFNKKFGLKSNN</sequence>
<name>RL31B_STAAN</name>
<proteinExistence type="evidence at protein level"/>
<reference key="1">
    <citation type="journal article" date="2001" name="Lancet">
        <title>Whole genome sequencing of meticillin-resistant Staphylococcus aureus.</title>
        <authorList>
            <person name="Kuroda M."/>
            <person name="Ohta T."/>
            <person name="Uchiyama I."/>
            <person name="Baba T."/>
            <person name="Yuzawa H."/>
            <person name="Kobayashi I."/>
            <person name="Cui L."/>
            <person name="Oguchi A."/>
            <person name="Aoki K."/>
            <person name="Nagai Y."/>
            <person name="Lian J.-Q."/>
            <person name="Ito T."/>
            <person name="Kanamori M."/>
            <person name="Matsumaru H."/>
            <person name="Maruyama A."/>
            <person name="Murakami H."/>
            <person name="Hosoyama A."/>
            <person name="Mizutani-Ui Y."/>
            <person name="Takahashi N.K."/>
            <person name="Sawano T."/>
            <person name="Inoue R."/>
            <person name="Kaito C."/>
            <person name="Sekimizu K."/>
            <person name="Hirakawa H."/>
            <person name="Kuhara S."/>
            <person name="Goto S."/>
            <person name="Yabuzaki J."/>
            <person name="Kanehisa M."/>
            <person name="Yamashita A."/>
            <person name="Oshima K."/>
            <person name="Furuya K."/>
            <person name="Yoshino C."/>
            <person name="Shiba T."/>
            <person name="Hattori M."/>
            <person name="Ogasawara N."/>
            <person name="Hayashi H."/>
            <person name="Hiramatsu K."/>
        </authorList>
    </citation>
    <scope>NUCLEOTIDE SEQUENCE [LARGE SCALE GENOMIC DNA]</scope>
    <source>
        <strain>N315</strain>
    </source>
</reference>
<reference key="2">
    <citation type="submission" date="2007-10" db="UniProtKB">
        <title>Shotgun proteomic analysis of total and membrane protein extracts of S. aureus strain N315.</title>
        <authorList>
            <person name="Vaezzadeh A.R."/>
            <person name="Deshusses J."/>
            <person name="Lescuyer P."/>
            <person name="Hochstrasser D.F."/>
        </authorList>
    </citation>
    <scope>IDENTIFICATION BY MASS SPECTROMETRY [LARGE SCALE ANALYSIS]</scope>
    <source>
        <strain>N315</strain>
    </source>
</reference>